<reference key="1">
    <citation type="journal article" date="2009" name="Appl. Environ. Microbiol.">
        <title>Three genomes from the phylum Acidobacteria provide insight into the lifestyles of these microorganisms in soils.</title>
        <authorList>
            <person name="Ward N.L."/>
            <person name="Challacombe J.F."/>
            <person name="Janssen P.H."/>
            <person name="Henrissat B."/>
            <person name="Coutinho P.M."/>
            <person name="Wu M."/>
            <person name="Xie G."/>
            <person name="Haft D.H."/>
            <person name="Sait M."/>
            <person name="Badger J."/>
            <person name="Barabote R.D."/>
            <person name="Bradley B."/>
            <person name="Brettin T.S."/>
            <person name="Brinkac L.M."/>
            <person name="Bruce D."/>
            <person name="Creasy T."/>
            <person name="Daugherty S.C."/>
            <person name="Davidsen T.M."/>
            <person name="DeBoy R.T."/>
            <person name="Detter J.C."/>
            <person name="Dodson R.J."/>
            <person name="Durkin A.S."/>
            <person name="Ganapathy A."/>
            <person name="Gwinn-Giglio M."/>
            <person name="Han C.S."/>
            <person name="Khouri H."/>
            <person name="Kiss H."/>
            <person name="Kothari S.P."/>
            <person name="Madupu R."/>
            <person name="Nelson K.E."/>
            <person name="Nelson W.C."/>
            <person name="Paulsen I."/>
            <person name="Penn K."/>
            <person name="Ren Q."/>
            <person name="Rosovitz M.J."/>
            <person name="Selengut J.D."/>
            <person name="Shrivastava S."/>
            <person name="Sullivan S.A."/>
            <person name="Tapia R."/>
            <person name="Thompson L.S."/>
            <person name="Watkins K.L."/>
            <person name="Yang Q."/>
            <person name="Yu C."/>
            <person name="Zafar N."/>
            <person name="Zhou L."/>
            <person name="Kuske C.R."/>
        </authorList>
    </citation>
    <scope>NUCLEOTIDE SEQUENCE [LARGE SCALE GENOMIC DNA]</scope>
    <source>
        <strain>Ellin6076</strain>
    </source>
</reference>
<accession>Q02CU2</accession>
<keyword id="KW-0997">Cell inner membrane</keyword>
<keyword id="KW-1003">Cell membrane</keyword>
<keyword id="KW-0472">Membrane</keyword>
<keyword id="KW-0520">NAD</keyword>
<keyword id="KW-0874">Quinone</keyword>
<keyword id="KW-1278">Translocase</keyword>
<keyword id="KW-0812">Transmembrane</keyword>
<keyword id="KW-1133">Transmembrane helix</keyword>
<keyword id="KW-0813">Transport</keyword>
<keyword id="KW-0830">Ubiquinone</keyword>
<sequence>MPKSYTELYFPILLQAVIAMGLAAGLLTVSYLLGKKVRNRVKDMPYESGIVPTGDARHRFSVKFYLVGMLFILFDIEAIFLYPWVVVYRDLSRNGSLFGFYEMLTFVILILSGFFYIWKKGALDWGEPTARPGRK</sequence>
<proteinExistence type="inferred from homology"/>
<dbReference type="EC" id="7.1.1.-" evidence="1"/>
<dbReference type="EMBL" id="CP000473">
    <property type="protein sequence ID" value="ABJ81124.1"/>
    <property type="molecule type" value="Genomic_DNA"/>
</dbReference>
<dbReference type="SMR" id="Q02CU2"/>
<dbReference type="FunCoup" id="Q02CU2">
    <property type="interactions" value="228"/>
</dbReference>
<dbReference type="STRING" id="234267.Acid_0109"/>
<dbReference type="KEGG" id="sus:Acid_0109"/>
<dbReference type="eggNOG" id="COG0838">
    <property type="taxonomic scope" value="Bacteria"/>
</dbReference>
<dbReference type="HOGENOM" id="CLU_119549_2_1_0"/>
<dbReference type="InParanoid" id="Q02CU2"/>
<dbReference type="OrthoDB" id="9791970at2"/>
<dbReference type="GO" id="GO:0030964">
    <property type="term" value="C:NADH dehydrogenase complex"/>
    <property type="evidence" value="ECO:0007669"/>
    <property type="project" value="TreeGrafter"/>
</dbReference>
<dbReference type="GO" id="GO:0005886">
    <property type="term" value="C:plasma membrane"/>
    <property type="evidence" value="ECO:0007669"/>
    <property type="project" value="UniProtKB-SubCell"/>
</dbReference>
<dbReference type="GO" id="GO:0008137">
    <property type="term" value="F:NADH dehydrogenase (ubiquinone) activity"/>
    <property type="evidence" value="ECO:0007669"/>
    <property type="project" value="InterPro"/>
</dbReference>
<dbReference type="GO" id="GO:0050136">
    <property type="term" value="F:NADH:ubiquinone reductase (non-electrogenic) activity"/>
    <property type="evidence" value="ECO:0007669"/>
    <property type="project" value="UniProtKB-UniRule"/>
</dbReference>
<dbReference type="GO" id="GO:0048038">
    <property type="term" value="F:quinone binding"/>
    <property type="evidence" value="ECO:0007669"/>
    <property type="project" value="UniProtKB-KW"/>
</dbReference>
<dbReference type="Gene3D" id="1.20.58.1610">
    <property type="entry name" value="NADH:ubiquinone/plastoquinone oxidoreductase, chain 3"/>
    <property type="match status" value="1"/>
</dbReference>
<dbReference type="HAMAP" id="MF_01394">
    <property type="entry name" value="NDH1_NuoA"/>
    <property type="match status" value="1"/>
</dbReference>
<dbReference type="InterPro" id="IPR023043">
    <property type="entry name" value="NAD(P)H_OxRDtase_bac/plastid"/>
</dbReference>
<dbReference type="InterPro" id="IPR000440">
    <property type="entry name" value="NADH_UbQ/plastoQ_OxRdtase_su3"/>
</dbReference>
<dbReference type="InterPro" id="IPR038430">
    <property type="entry name" value="NDAH_ubi_oxred_su3_sf"/>
</dbReference>
<dbReference type="PANTHER" id="PTHR11058:SF22">
    <property type="entry name" value="NADH-QUINONE OXIDOREDUCTASE SUBUNIT A"/>
    <property type="match status" value="1"/>
</dbReference>
<dbReference type="PANTHER" id="PTHR11058">
    <property type="entry name" value="NADH-UBIQUINONE OXIDOREDUCTASE CHAIN 3"/>
    <property type="match status" value="1"/>
</dbReference>
<dbReference type="Pfam" id="PF00507">
    <property type="entry name" value="Oxidored_q4"/>
    <property type="match status" value="1"/>
</dbReference>
<evidence type="ECO:0000255" key="1">
    <source>
        <dbReference type="HAMAP-Rule" id="MF_01394"/>
    </source>
</evidence>
<name>NUOA_SOLUE</name>
<protein>
    <recommendedName>
        <fullName evidence="1">NADH-quinone oxidoreductase subunit A</fullName>
        <ecNumber evidence="1">7.1.1.-</ecNumber>
    </recommendedName>
    <alternativeName>
        <fullName evidence="1">NADH dehydrogenase I subunit A</fullName>
    </alternativeName>
    <alternativeName>
        <fullName evidence="1">NDH-1 subunit A</fullName>
    </alternativeName>
    <alternativeName>
        <fullName evidence="1">NUO1</fullName>
    </alternativeName>
</protein>
<feature type="chain" id="PRO_0000362784" description="NADH-quinone oxidoreductase subunit A">
    <location>
        <begin position="1"/>
        <end position="135"/>
    </location>
</feature>
<feature type="transmembrane region" description="Helical" evidence="1">
    <location>
        <begin position="9"/>
        <end position="29"/>
    </location>
</feature>
<feature type="transmembrane region" description="Helical" evidence="1">
    <location>
        <begin position="67"/>
        <end position="87"/>
    </location>
</feature>
<feature type="transmembrane region" description="Helical" evidence="1">
    <location>
        <begin position="97"/>
        <end position="117"/>
    </location>
</feature>
<gene>
    <name evidence="1" type="primary">nuoA</name>
    <name type="ordered locus">Acid_0109</name>
</gene>
<organism>
    <name type="scientific">Solibacter usitatus (strain Ellin6076)</name>
    <dbReference type="NCBI Taxonomy" id="234267"/>
    <lineage>
        <taxon>Bacteria</taxon>
        <taxon>Pseudomonadati</taxon>
        <taxon>Acidobacteriota</taxon>
        <taxon>Terriglobia</taxon>
        <taxon>Bryobacterales</taxon>
        <taxon>Solibacteraceae</taxon>
        <taxon>Candidatus Solibacter</taxon>
    </lineage>
</organism>
<comment type="function">
    <text evidence="1">NDH-1 shuttles electrons from NADH, via FMN and iron-sulfur (Fe-S) centers, to quinones in the respiratory chain. The immediate electron acceptor for the enzyme in this species is believed to be ubiquinone. Couples the redox reaction to proton translocation (for every two electrons transferred, four hydrogen ions are translocated across the cytoplasmic membrane), and thus conserves the redox energy in a proton gradient.</text>
</comment>
<comment type="catalytic activity">
    <reaction evidence="1">
        <text>a quinone + NADH + 5 H(+)(in) = a quinol + NAD(+) + 4 H(+)(out)</text>
        <dbReference type="Rhea" id="RHEA:57888"/>
        <dbReference type="ChEBI" id="CHEBI:15378"/>
        <dbReference type="ChEBI" id="CHEBI:24646"/>
        <dbReference type="ChEBI" id="CHEBI:57540"/>
        <dbReference type="ChEBI" id="CHEBI:57945"/>
        <dbReference type="ChEBI" id="CHEBI:132124"/>
    </reaction>
</comment>
<comment type="subunit">
    <text evidence="1">NDH-1 is composed of 14 different subunits. Subunits NuoA, H, J, K, L, M, N constitute the membrane sector of the complex.</text>
</comment>
<comment type="subcellular location">
    <subcellularLocation>
        <location evidence="1">Cell inner membrane</location>
        <topology evidence="1">Multi-pass membrane protein</topology>
    </subcellularLocation>
</comment>
<comment type="similarity">
    <text evidence="1">Belongs to the complex I subunit 3 family.</text>
</comment>